<gene>
    <name evidence="1" type="primary">rppH</name>
    <name evidence="1" type="synonym">nudH</name>
    <name type="ordered locus">Z4147</name>
    <name type="ordered locus">ECs3687</name>
</gene>
<comment type="function">
    <text evidence="1">Accelerates the degradation of transcripts by removing pyrophosphate from the 5'-end of triphosphorylated RNA, leading to a more labile monophosphorylated state that can stimulate subsequent ribonuclease cleavage.</text>
</comment>
<comment type="cofactor">
    <cofactor evidence="1">
        <name>a divalent metal cation</name>
        <dbReference type="ChEBI" id="CHEBI:60240"/>
    </cofactor>
</comment>
<comment type="similarity">
    <text evidence="1">Belongs to the Nudix hydrolase family. RppH subfamily.</text>
</comment>
<reference key="1">
    <citation type="journal article" date="2001" name="Nature">
        <title>Genome sequence of enterohaemorrhagic Escherichia coli O157:H7.</title>
        <authorList>
            <person name="Perna N.T."/>
            <person name="Plunkett G. III"/>
            <person name="Burland V."/>
            <person name="Mau B."/>
            <person name="Glasner J.D."/>
            <person name="Rose D.J."/>
            <person name="Mayhew G.F."/>
            <person name="Evans P.S."/>
            <person name="Gregor J."/>
            <person name="Kirkpatrick H.A."/>
            <person name="Posfai G."/>
            <person name="Hackett J."/>
            <person name="Klink S."/>
            <person name="Boutin A."/>
            <person name="Shao Y."/>
            <person name="Miller L."/>
            <person name="Grotbeck E.J."/>
            <person name="Davis N.W."/>
            <person name="Lim A."/>
            <person name="Dimalanta E.T."/>
            <person name="Potamousis K."/>
            <person name="Apodaca J."/>
            <person name="Anantharaman T.S."/>
            <person name="Lin J."/>
            <person name="Yen G."/>
            <person name="Schwartz D.C."/>
            <person name="Welch R.A."/>
            <person name="Blattner F.R."/>
        </authorList>
    </citation>
    <scope>NUCLEOTIDE SEQUENCE [LARGE SCALE GENOMIC DNA]</scope>
    <source>
        <strain>O157:H7 / EDL933 / ATCC 700927 / EHEC</strain>
    </source>
</reference>
<reference key="2">
    <citation type="journal article" date="2001" name="DNA Res.">
        <title>Complete genome sequence of enterohemorrhagic Escherichia coli O157:H7 and genomic comparison with a laboratory strain K-12.</title>
        <authorList>
            <person name="Hayashi T."/>
            <person name="Makino K."/>
            <person name="Ohnishi M."/>
            <person name="Kurokawa K."/>
            <person name="Ishii K."/>
            <person name="Yokoyama K."/>
            <person name="Han C.-G."/>
            <person name="Ohtsubo E."/>
            <person name="Nakayama K."/>
            <person name="Murata T."/>
            <person name="Tanaka M."/>
            <person name="Tobe T."/>
            <person name="Iida T."/>
            <person name="Takami H."/>
            <person name="Honda T."/>
            <person name="Sasakawa C."/>
            <person name="Ogasawara N."/>
            <person name="Yasunaga T."/>
            <person name="Kuhara S."/>
            <person name="Shiba T."/>
            <person name="Hattori M."/>
            <person name="Shinagawa H."/>
        </authorList>
    </citation>
    <scope>NUCLEOTIDE SEQUENCE [LARGE SCALE GENOMIC DNA]</scope>
    <source>
        <strain>O157:H7 / Sakai / RIMD 0509952 / EHEC</strain>
    </source>
</reference>
<accession>P0A778</accession>
<accession>Q46930</accession>
<proteinExistence type="inferred from homology"/>
<sequence>MIDDDGYRPNVGIVICNRQGQVMWARRFGQHSWQFPQGGINPGESAEQAMYRELFEEVGLSRKDVRILASTRNWLRYKLPKRLVRWDTKPVCIGQKQKWFLLQLVSGDAEINMQTSSTPEFDGWRWVSYWYPVRQVVSFKRDVYRRVMKEFASVVMSLQENTPKPQNASAYRRKRG</sequence>
<evidence type="ECO:0000255" key="1">
    <source>
        <dbReference type="HAMAP-Rule" id="MF_00298"/>
    </source>
</evidence>
<dbReference type="EC" id="3.6.1.-" evidence="1"/>
<dbReference type="EMBL" id="AE005174">
    <property type="protein sequence ID" value="AAG57941.1"/>
    <property type="molecule type" value="Genomic_DNA"/>
</dbReference>
<dbReference type="EMBL" id="BA000007">
    <property type="protein sequence ID" value="BAB37110.1"/>
    <property type="molecule type" value="Genomic_DNA"/>
</dbReference>
<dbReference type="PIR" id="A85935">
    <property type="entry name" value="A85935"/>
</dbReference>
<dbReference type="PIR" id="G91089">
    <property type="entry name" value="G91089"/>
</dbReference>
<dbReference type="RefSeq" id="NP_311714.1">
    <property type="nucleotide sequence ID" value="NC_002695.1"/>
</dbReference>
<dbReference type="RefSeq" id="WP_000564489.1">
    <property type="nucleotide sequence ID" value="NZ_VOAI01000003.1"/>
</dbReference>
<dbReference type="SMR" id="P0A778"/>
<dbReference type="STRING" id="155864.Z4147"/>
<dbReference type="GeneID" id="75203778"/>
<dbReference type="GeneID" id="916489"/>
<dbReference type="KEGG" id="ece:Z4147"/>
<dbReference type="KEGG" id="ecs:ECs_3687"/>
<dbReference type="PATRIC" id="fig|386585.9.peg.3854"/>
<dbReference type="eggNOG" id="COG0494">
    <property type="taxonomic scope" value="Bacteria"/>
</dbReference>
<dbReference type="HOGENOM" id="CLU_087195_3_2_6"/>
<dbReference type="OMA" id="PCVGIML"/>
<dbReference type="Proteomes" id="UP000000558">
    <property type="component" value="Chromosome"/>
</dbReference>
<dbReference type="Proteomes" id="UP000002519">
    <property type="component" value="Chromosome"/>
</dbReference>
<dbReference type="GO" id="GO:0005737">
    <property type="term" value="C:cytoplasm"/>
    <property type="evidence" value="ECO:0007669"/>
    <property type="project" value="TreeGrafter"/>
</dbReference>
<dbReference type="GO" id="GO:0034353">
    <property type="term" value="F:mRNA 5'-diphosphatase activity"/>
    <property type="evidence" value="ECO:0007669"/>
    <property type="project" value="TreeGrafter"/>
</dbReference>
<dbReference type="GO" id="GO:0006402">
    <property type="term" value="P:mRNA catabolic process"/>
    <property type="evidence" value="ECO:0007669"/>
    <property type="project" value="TreeGrafter"/>
</dbReference>
<dbReference type="CDD" id="cd03671">
    <property type="entry name" value="NUDIX_Ap4A_hydrolase_plant_like"/>
    <property type="match status" value="1"/>
</dbReference>
<dbReference type="FunFam" id="3.90.79.10:FF:000001">
    <property type="entry name" value="RNA pyrophosphohydrolase"/>
    <property type="match status" value="1"/>
</dbReference>
<dbReference type="Gene3D" id="3.90.79.10">
    <property type="entry name" value="Nucleoside Triphosphate Pyrophosphohydrolase"/>
    <property type="match status" value="1"/>
</dbReference>
<dbReference type="HAMAP" id="MF_00298">
    <property type="entry name" value="Nudix_RppH"/>
    <property type="match status" value="1"/>
</dbReference>
<dbReference type="InterPro" id="IPR020476">
    <property type="entry name" value="Nudix_hydrolase"/>
</dbReference>
<dbReference type="InterPro" id="IPR015797">
    <property type="entry name" value="NUDIX_hydrolase-like_dom_sf"/>
</dbReference>
<dbReference type="InterPro" id="IPR020084">
    <property type="entry name" value="NUDIX_hydrolase_CS"/>
</dbReference>
<dbReference type="InterPro" id="IPR000086">
    <property type="entry name" value="NUDIX_hydrolase_dom"/>
</dbReference>
<dbReference type="InterPro" id="IPR022927">
    <property type="entry name" value="RppH"/>
</dbReference>
<dbReference type="NCBIfam" id="NF001934">
    <property type="entry name" value="PRK00714.1-1"/>
    <property type="match status" value="1"/>
</dbReference>
<dbReference type="NCBIfam" id="NF001937">
    <property type="entry name" value="PRK00714.1-4"/>
    <property type="match status" value="1"/>
</dbReference>
<dbReference type="NCBIfam" id="NF001938">
    <property type="entry name" value="PRK00714.1-5"/>
    <property type="match status" value="1"/>
</dbReference>
<dbReference type="PANTHER" id="PTHR23114">
    <property type="entry name" value="M7GPPPN-MRNA HYDROLASE"/>
    <property type="match status" value="1"/>
</dbReference>
<dbReference type="PANTHER" id="PTHR23114:SF17">
    <property type="entry name" value="M7GPPPN-MRNA HYDROLASE"/>
    <property type="match status" value="1"/>
</dbReference>
<dbReference type="Pfam" id="PF00293">
    <property type="entry name" value="NUDIX"/>
    <property type="match status" value="1"/>
</dbReference>
<dbReference type="PRINTS" id="PR00502">
    <property type="entry name" value="NUDIXFAMILY"/>
</dbReference>
<dbReference type="SUPFAM" id="SSF55811">
    <property type="entry name" value="Nudix"/>
    <property type="match status" value="1"/>
</dbReference>
<dbReference type="PROSITE" id="PS51462">
    <property type="entry name" value="NUDIX"/>
    <property type="match status" value="1"/>
</dbReference>
<dbReference type="PROSITE" id="PS00893">
    <property type="entry name" value="NUDIX_BOX"/>
    <property type="match status" value="1"/>
</dbReference>
<keyword id="KW-0378">Hydrolase</keyword>
<keyword id="KW-1185">Reference proteome</keyword>
<organism>
    <name type="scientific">Escherichia coli O157:H7</name>
    <dbReference type="NCBI Taxonomy" id="83334"/>
    <lineage>
        <taxon>Bacteria</taxon>
        <taxon>Pseudomonadati</taxon>
        <taxon>Pseudomonadota</taxon>
        <taxon>Gammaproteobacteria</taxon>
        <taxon>Enterobacterales</taxon>
        <taxon>Enterobacteriaceae</taxon>
        <taxon>Escherichia</taxon>
    </lineage>
</organism>
<protein>
    <recommendedName>
        <fullName evidence="1">RNA pyrophosphohydrolase</fullName>
        <ecNumber evidence="1">3.6.1.-</ecNumber>
    </recommendedName>
    <alternativeName>
        <fullName evidence="1">(Di)nucleoside polyphosphate hydrolase</fullName>
    </alternativeName>
</protein>
<feature type="chain" id="PRO_0000057007" description="RNA pyrophosphohydrolase">
    <location>
        <begin position="1"/>
        <end position="176"/>
    </location>
</feature>
<feature type="domain" description="Nudix hydrolase" evidence="1">
    <location>
        <begin position="6"/>
        <end position="149"/>
    </location>
</feature>
<feature type="short sequence motif" description="Nudix box">
    <location>
        <begin position="38"/>
        <end position="59"/>
    </location>
</feature>
<name>RPPH_ECO57</name>